<name>RL23_JANSC</name>
<evidence type="ECO:0000255" key="1">
    <source>
        <dbReference type="HAMAP-Rule" id="MF_01369"/>
    </source>
</evidence>
<evidence type="ECO:0000305" key="2"/>
<feature type="chain" id="PRO_0000272762" description="Large ribosomal subunit protein uL23">
    <location>
        <begin position="1"/>
        <end position="98"/>
    </location>
</feature>
<keyword id="KW-1185">Reference proteome</keyword>
<keyword id="KW-0687">Ribonucleoprotein</keyword>
<keyword id="KW-0689">Ribosomal protein</keyword>
<keyword id="KW-0694">RNA-binding</keyword>
<keyword id="KW-0699">rRNA-binding</keyword>
<comment type="function">
    <text evidence="1">One of the early assembly proteins it binds 23S rRNA. One of the proteins that surrounds the polypeptide exit tunnel on the outside of the ribosome. Forms the main docking site for trigger factor binding to the ribosome.</text>
</comment>
<comment type="subunit">
    <text evidence="1">Part of the 50S ribosomal subunit. Contacts protein L29, and trigger factor when it is bound to the ribosome.</text>
</comment>
<comment type="similarity">
    <text evidence="1">Belongs to the universal ribosomal protein uL23 family.</text>
</comment>
<gene>
    <name evidence="1" type="primary">rplW</name>
    <name type="ordered locus">Jann_0585</name>
</gene>
<sequence length="98" mass="10681">MSADAKHYDVIRKPLITEKTTMASENGAVVFEVAIDSNKPQIKEAVEAVFGVKVKAVNTTITKGKVKRFRGQLGTRKDVKKAYVTLEEGNTIDVSTGL</sequence>
<reference key="1">
    <citation type="submission" date="2006-02" db="EMBL/GenBank/DDBJ databases">
        <title>Complete sequence of chromosome of Jannaschia sp. CCS1.</title>
        <authorList>
            <consortium name="US DOE Joint Genome Institute"/>
            <person name="Copeland A."/>
            <person name="Lucas S."/>
            <person name="Lapidus A."/>
            <person name="Barry K."/>
            <person name="Detter J.C."/>
            <person name="Glavina del Rio T."/>
            <person name="Hammon N."/>
            <person name="Israni S."/>
            <person name="Pitluck S."/>
            <person name="Brettin T."/>
            <person name="Bruce D."/>
            <person name="Han C."/>
            <person name="Tapia R."/>
            <person name="Gilna P."/>
            <person name="Chertkov O."/>
            <person name="Saunders E."/>
            <person name="Schmutz J."/>
            <person name="Larimer F."/>
            <person name="Land M."/>
            <person name="Kyrpides N."/>
            <person name="Lykidis A."/>
            <person name="Moran M.A."/>
            <person name="Belas R."/>
            <person name="Ye W."/>
            <person name="Buchan A."/>
            <person name="Gonzalez J.M."/>
            <person name="Schell M.A."/>
            <person name="Richardson P."/>
        </authorList>
    </citation>
    <scope>NUCLEOTIDE SEQUENCE [LARGE SCALE GENOMIC DNA]</scope>
    <source>
        <strain>CCS1</strain>
    </source>
</reference>
<proteinExistence type="inferred from homology"/>
<dbReference type="EMBL" id="CP000264">
    <property type="protein sequence ID" value="ABD53502.1"/>
    <property type="molecule type" value="Genomic_DNA"/>
</dbReference>
<dbReference type="RefSeq" id="WP_011453710.1">
    <property type="nucleotide sequence ID" value="NC_007802.1"/>
</dbReference>
<dbReference type="SMR" id="Q28UW0"/>
<dbReference type="STRING" id="290400.Jann_0585"/>
<dbReference type="KEGG" id="jan:Jann_0585"/>
<dbReference type="eggNOG" id="COG0089">
    <property type="taxonomic scope" value="Bacteria"/>
</dbReference>
<dbReference type="HOGENOM" id="CLU_037562_3_1_5"/>
<dbReference type="OrthoDB" id="9793353at2"/>
<dbReference type="Proteomes" id="UP000008326">
    <property type="component" value="Chromosome"/>
</dbReference>
<dbReference type="GO" id="GO:1990904">
    <property type="term" value="C:ribonucleoprotein complex"/>
    <property type="evidence" value="ECO:0007669"/>
    <property type="project" value="UniProtKB-KW"/>
</dbReference>
<dbReference type="GO" id="GO:0005840">
    <property type="term" value="C:ribosome"/>
    <property type="evidence" value="ECO:0007669"/>
    <property type="project" value="UniProtKB-KW"/>
</dbReference>
<dbReference type="GO" id="GO:0019843">
    <property type="term" value="F:rRNA binding"/>
    <property type="evidence" value="ECO:0007669"/>
    <property type="project" value="UniProtKB-UniRule"/>
</dbReference>
<dbReference type="GO" id="GO:0003735">
    <property type="term" value="F:structural constituent of ribosome"/>
    <property type="evidence" value="ECO:0007669"/>
    <property type="project" value="InterPro"/>
</dbReference>
<dbReference type="GO" id="GO:0006412">
    <property type="term" value="P:translation"/>
    <property type="evidence" value="ECO:0007669"/>
    <property type="project" value="UniProtKB-UniRule"/>
</dbReference>
<dbReference type="FunFam" id="3.30.70.330:FF:000001">
    <property type="entry name" value="50S ribosomal protein L23"/>
    <property type="match status" value="1"/>
</dbReference>
<dbReference type="Gene3D" id="3.30.70.330">
    <property type="match status" value="1"/>
</dbReference>
<dbReference type="HAMAP" id="MF_01369_B">
    <property type="entry name" value="Ribosomal_uL23_B"/>
    <property type="match status" value="1"/>
</dbReference>
<dbReference type="InterPro" id="IPR012677">
    <property type="entry name" value="Nucleotide-bd_a/b_plait_sf"/>
</dbReference>
<dbReference type="InterPro" id="IPR013025">
    <property type="entry name" value="Ribosomal_uL23-like"/>
</dbReference>
<dbReference type="InterPro" id="IPR012678">
    <property type="entry name" value="Ribosomal_uL23/eL15/eS24_sf"/>
</dbReference>
<dbReference type="NCBIfam" id="NF004359">
    <property type="entry name" value="PRK05738.1-3"/>
    <property type="match status" value="1"/>
</dbReference>
<dbReference type="NCBIfam" id="NF004360">
    <property type="entry name" value="PRK05738.1-5"/>
    <property type="match status" value="1"/>
</dbReference>
<dbReference type="NCBIfam" id="NF004363">
    <property type="entry name" value="PRK05738.2-4"/>
    <property type="match status" value="1"/>
</dbReference>
<dbReference type="PANTHER" id="PTHR11620">
    <property type="entry name" value="60S RIBOSOMAL PROTEIN L23A"/>
    <property type="match status" value="1"/>
</dbReference>
<dbReference type="Pfam" id="PF00276">
    <property type="entry name" value="Ribosomal_L23"/>
    <property type="match status" value="1"/>
</dbReference>
<dbReference type="SUPFAM" id="SSF54189">
    <property type="entry name" value="Ribosomal proteins S24e, L23 and L15e"/>
    <property type="match status" value="1"/>
</dbReference>
<protein>
    <recommendedName>
        <fullName evidence="1">Large ribosomal subunit protein uL23</fullName>
    </recommendedName>
    <alternativeName>
        <fullName evidence="2">50S ribosomal protein L23</fullName>
    </alternativeName>
</protein>
<organism>
    <name type="scientific">Jannaschia sp. (strain CCS1)</name>
    <dbReference type="NCBI Taxonomy" id="290400"/>
    <lineage>
        <taxon>Bacteria</taxon>
        <taxon>Pseudomonadati</taxon>
        <taxon>Pseudomonadota</taxon>
        <taxon>Alphaproteobacteria</taxon>
        <taxon>Rhodobacterales</taxon>
        <taxon>Roseobacteraceae</taxon>
        <taxon>Jannaschia</taxon>
    </lineage>
</organism>
<accession>Q28UW0</accession>